<comment type="function">
    <text evidence="1">Catalyzes the hydrolysis of glutamine to glutamate and ammonia as part of the biosynthesis of pyridoxal 5'-phosphate. The resulting ammonia molecule is channeled to the active site of PdxS.</text>
</comment>
<comment type="catalytic activity">
    <reaction evidence="1">
        <text>aldehydo-D-ribose 5-phosphate + D-glyceraldehyde 3-phosphate + L-glutamine = pyridoxal 5'-phosphate + L-glutamate + phosphate + 3 H2O + H(+)</text>
        <dbReference type="Rhea" id="RHEA:31507"/>
        <dbReference type="ChEBI" id="CHEBI:15377"/>
        <dbReference type="ChEBI" id="CHEBI:15378"/>
        <dbReference type="ChEBI" id="CHEBI:29985"/>
        <dbReference type="ChEBI" id="CHEBI:43474"/>
        <dbReference type="ChEBI" id="CHEBI:58273"/>
        <dbReference type="ChEBI" id="CHEBI:58359"/>
        <dbReference type="ChEBI" id="CHEBI:59776"/>
        <dbReference type="ChEBI" id="CHEBI:597326"/>
        <dbReference type="EC" id="4.3.3.6"/>
    </reaction>
</comment>
<comment type="catalytic activity">
    <reaction evidence="1">
        <text>L-glutamine + H2O = L-glutamate + NH4(+)</text>
        <dbReference type="Rhea" id="RHEA:15889"/>
        <dbReference type="ChEBI" id="CHEBI:15377"/>
        <dbReference type="ChEBI" id="CHEBI:28938"/>
        <dbReference type="ChEBI" id="CHEBI:29985"/>
        <dbReference type="ChEBI" id="CHEBI:58359"/>
        <dbReference type="EC" id="3.5.1.2"/>
    </reaction>
</comment>
<comment type="pathway">
    <text evidence="1">Cofactor biosynthesis; pyridoxal 5'-phosphate biosynthesis.</text>
</comment>
<comment type="subunit">
    <text evidence="1">In the presence of PdxS, forms a dodecamer of heterodimers. Only shows activity in the heterodimer.</text>
</comment>
<comment type="similarity">
    <text evidence="1">Belongs to the glutaminase PdxT/SNO family.</text>
</comment>
<gene>
    <name evidence="1" type="primary">pdxT</name>
    <name type="ordered locus">STK_14420</name>
</gene>
<evidence type="ECO:0000255" key="1">
    <source>
        <dbReference type="HAMAP-Rule" id="MF_01615"/>
    </source>
</evidence>
<feature type="chain" id="PRO_0000135693" description="Pyridoxal 5'-phosphate synthase subunit PdxT">
    <location>
        <begin position="1"/>
        <end position="200"/>
    </location>
</feature>
<feature type="active site" description="Nucleophile" evidence="1">
    <location>
        <position position="84"/>
    </location>
</feature>
<feature type="active site" description="Charge relay system" evidence="1">
    <location>
        <position position="181"/>
    </location>
</feature>
<feature type="active site" description="Charge relay system" evidence="1">
    <location>
        <position position="183"/>
    </location>
</feature>
<feature type="binding site" evidence="1">
    <location>
        <begin position="52"/>
        <end position="54"/>
    </location>
    <ligand>
        <name>L-glutamine</name>
        <dbReference type="ChEBI" id="CHEBI:58359"/>
    </ligand>
</feature>
<feature type="binding site" evidence="1">
    <location>
        <position position="116"/>
    </location>
    <ligand>
        <name>L-glutamine</name>
        <dbReference type="ChEBI" id="CHEBI:58359"/>
    </ligand>
</feature>
<feature type="binding site" evidence="1">
    <location>
        <begin position="145"/>
        <end position="146"/>
    </location>
    <ligand>
        <name>L-glutamine</name>
        <dbReference type="ChEBI" id="CHEBI:58359"/>
    </ligand>
</feature>
<sequence length="200" mass="21659">MKIGIVAYQGSFEEHALQTKRALDNLKIQGDIVAVKKPNDLKDVDAIIIPGGESTTIGVVAQKLGILDELKEKINSGIPTLGTCAGAIILAKDVTDAKVGKKSQPLIGSMDISVIRNYYGRQRESFEATVDLSEIGGGKTRVVFIRAPAIVKTWGDAKPLSKLNDVIIMAMERNMVATTFHPELSSTTVIHEFLIKMAKK</sequence>
<protein>
    <recommendedName>
        <fullName evidence="1">Pyridoxal 5'-phosphate synthase subunit PdxT</fullName>
        <ecNumber evidence="1">4.3.3.6</ecNumber>
    </recommendedName>
    <alternativeName>
        <fullName evidence="1">Pdx2</fullName>
    </alternativeName>
    <alternativeName>
        <fullName evidence="1">Pyridoxal 5'-phosphate synthase glutaminase subunit</fullName>
        <ecNumber evidence="1">3.5.1.2</ecNumber>
    </alternativeName>
</protein>
<name>PDXT_SULTO</name>
<proteinExistence type="inferred from homology"/>
<keyword id="KW-0315">Glutamine amidotransferase</keyword>
<keyword id="KW-0378">Hydrolase</keyword>
<keyword id="KW-0456">Lyase</keyword>
<keyword id="KW-0663">Pyridoxal phosphate</keyword>
<keyword id="KW-1185">Reference proteome</keyword>
<dbReference type="EC" id="4.3.3.6" evidence="1"/>
<dbReference type="EC" id="3.5.1.2" evidence="1"/>
<dbReference type="EMBL" id="BA000023">
    <property type="protein sequence ID" value="BAB66511.1"/>
    <property type="molecule type" value="Genomic_DNA"/>
</dbReference>
<dbReference type="RefSeq" id="WP_010979489.1">
    <property type="nucleotide sequence ID" value="NC_003106.2"/>
</dbReference>
<dbReference type="SMR" id="Q971B2"/>
<dbReference type="STRING" id="273063.STK_14420"/>
<dbReference type="GeneID" id="1459475"/>
<dbReference type="KEGG" id="sto:STK_14420"/>
<dbReference type="PATRIC" id="fig|273063.9.peg.1644"/>
<dbReference type="eggNOG" id="arCOG00034">
    <property type="taxonomic scope" value="Archaea"/>
</dbReference>
<dbReference type="OrthoDB" id="26717at2157"/>
<dbReference type="UniPathway" id="UPA00245"/>
<dbReference type="Proteomes" id="UP000001015">
    <property type="component" value="Chromosome"/>
</dbReference>
<dbReference type="GO" id="GO:0005829">
    <property type="term" value="C:cytosol"/>
    <property type="evidence" value="ECO:0007669"/>
    <property type="project" value="TreeGrafter"/>
</dbReference>
<dbReference type="GO" id="GO:1903600">
    <property type="term" value="C:glutaminase complex"/>
    <property type="evidence" value="ECO:0007669"/>
    <property type="project" value="TreeGrafter"/>
</dbReference>
<dbReference type="GO" id="GO:0004359">
    <property type="term" value="F:glutaminase activity"/>
    <property type="evidence" value="ECO:0007669"/>
    <property type="project" value="UniProtKB-UniRule"/>
</dbReference>
<dbReference type="GO" id="GO:0036381">
    <property type="term" value="F:pyridoxal 5'-phosphate synthase (glutamine hydrolysing) activity"/>
    <property type="evidence" value="ECO:0007669"/>
    <property type="project" value="UniProtKB-UniRule"/>
</dbReference>
<dbReference type="GO" id="GO:0006543">
    <property type="term" value="P:glutamine catabolic process"/>
    <property type="evidence" value="ECO:0007669"/>
    <property type="project" value="UniProtKB-UniRule"/>
</dbReference>
<dbReference type="GO" id="GO:0042823">
    <property type="term" value="P:pyridoxal phosphate biosynthetic process"/>
    <property type="evidence" value="ECO:0007669"/>
    <property type="project" value="UniProtKB-UniRule"/>
</dbReference>
<dbReference type="GO" id="GO:0008614">
    <property type="term" value="P:pyridoxine metabolic process"/>
    <property type="evidence" value="ECO:0007669"/>
    <property type="project" value="TreeGrafter"/>
</dbReference>
<dbReference type="CDD" id="cd01749">
    <property type="entry name" value="GATase1_PB"/>
    <property type="match status" value="1"/>
</dbReference>
<dbReference type="FunFam" id="3.40.50.880:FF:000041">
    <property type="entry name" value="Glutamine amidotransferase subunit pdxT, putative"/>
    <property type="match status" value="1"/>
</dbReference>
<dbReference type="Gene3D" id="3.40.50.880">
    <property type="match status" value="1"/>
</dbReference>
<dbReference type="HAMAP" id="MF_01615">
    <property type="entry name" value="PdxT"/>
    <property type="match status" value="1"/>
</dbReference>
<dbReference type="InterPro" id="IPR029062">
    <property type="entry name" value="Class_I_gatase-like"/>
</dbReference>
<dbReference type="InterPro" id="IPR002161">
    <property type="entry name" value="PdxT/SNO"/>
</dbReference>
<dbReference type="InterPro" id="IPR021196">
    <property type="entry name" value="PdxT/SNO_CS"/>
</dbReference>
<dbReference type="NCBIfam" id="TIGR03800">
    <property type="entry name" value="PLP_synth_Pdx2"/>
    <property type="match status" value="1"/>
</dbReference>
<dbReference type="PANTHER" id="PTHR31559">
    <property type="entry name" value="PYRIDOXAL 5'-PHOSPHATE SYNTHASE SUBUNIT SNO"/>
    <property type="match status" value="1"/>
</dbReference>
<dbReference type="PANTHER" id="PTHR31559:SF0">
    <property type="entry name" value="PYRIDOXAL 5'-PHOSPHATE SYNTHASE SUBUNIT SNO1-RELATED"/>
    <property type="match status" value="1"/>
</dbReference>
<dbReference type="Pfam" id="PF01174">
    <property type="entry name" value="SNO"/>
    <property type="match status" value="1"/>
</dbReference>
<dbReference type="PIRSF" id="PIRSF005639">
    <property type="entry name" value="Glut_amidoT_SNO"/>
    <property type="match status" value="1"/>
</dbReference>
<dbReference type="SUPFAM" id="SSF52317">
    <property type="entry name" value="Class I glutamine amidotransferase-like"/>
    <property type="match status" value="1"/>
</dbReference>
<dbReference type="PROSITE" id="PS01236">
    <property type="entry name" value="PDXT_SNO_1"/>
    <property type="match status" value="1"/>
</dbReference>
<dbReference type="PROSITE" id="PS51130">
    <property type="entry name" value="PDXT_SNO_2"/>
    <property type="match status" value="1"/>
</dbReference>
<reference key="1">
    <citation type="journal article" date="2001" name="DNA Res.">
        <title>Complete genome sequence of an aerobic thermoacidophilic Crenarchaeon, Sulfolobus tokodaii strain7.</title>
        <authorList>
            <person name="Kawarabayasi Y."/>
            <person name="Hino Y."/>
            <person name="Horikawa H."/>
            <person name="Jin-no K."/>
            <person name="Takahashi M."/>
            <person name="Sekine M."/>
            <person name="Baba S."/>
            <person name="Ankai A."/>
            <person name="Kosugi H."/>
            <person name="Hosoyama A."/>
            <person name="Fukui S."/>
            <person name="Nagai Y."/>
            <person name="Nishijima K."/>
            <person name="Otsuka R."/>
            <person name="Nakazawa H."/>
            <person name="Takamiya M."/>
            <person name="Kato Y."/>
            <person name="Yoshizawa T."/>
            <person name="Tanaka T."/>
            <person name="Kudoh Y."/>
            <person name="Yamazaki J."/>
            <person name="Kushida N."/>
            <person name="Oguchi A."/>
            <person name="Aoki K."/>
            <person name="Masuda S."/>
            <person name="Yanagii M."/>
            <person name="Nishimura M."/>
            <person name="Yamagishi A."/>
            <person name="Oshima T."/>
            <person name="Kikuchi H."/>
        </authorList>
    </citation>
    <scope>NUCLEOTIDE SEQUENCE [LARGE SCALE GENOMIC DNA]</scope>
    <source>
        <strain>DSM 16993 / JCM 10545 / NBRC 100140 / 7</strain>
    </source>
</reference>
<accession>Q971B2</accession>
<organism>
    <name type="scientific">Sulfurisphaera tokodaii (strain DSM 16993 / JCM 10545 / NBRC 100140 / 7)</name>
    <name type="common">Sulfolobus tokodaii</name>
    <dbReference type="NCBI Taxonomy" id="273063"/>
    <lineage>
        <taxon>Archaea</taxon>
        <taxon>Thermoproteota</taxon>
        <taxon>Thermoprotei</taxon>
        <taxon>Sulfolobales</taxon>
        <taxon>Sulfolobaceae</taxon>
        <taxon>Sulfurisphaera</taxon>
    </lineage>
</organism>